<proteinExistence type="inferred from homology"/>
<sequence length="142" mass="16537">MPTPSMEDYIEQIYLLIDEKGYARVSDIAEALSVHPSSVTKMVQKLDKDEYLIYEKYRGLVLTTKGKKIGERLVYRHDLLEQFMRIIGVDEGKIYNDVEGIEHHLSWEAIDRIGDLVEYFEQDAVRVETLRGVQRANEEKSN</sequence>
<gene>
    <name evidence="1" type="primary">mntR</name>
    <name type="ordered locus">BCG9842_B0920</name>
</gene>
<name>MNTR_BACC2</name>
<organism>
    <name type="scientific">Bacillus cereus (strain G9842)</name>
    <dbReference type="NCBI Taxonomy" id="405531"/>
    <lineage>
        <taxon>Bacteria</taxon>
        <taxon>Bacillati</taxon>
        <taxon>Bacillota</taxon>
        <taxon>Bacilli</taxon>
        <taxon>Bacillales</taxon>
        <taxon>Bacillaceae</taxon>
        <taxon>Bacillus</taxon>
        <taxon>Bacillus cereus group</taxon>
    </lineage>
</organism>
<dbReference type="EMBL" id="CP001186">
    <property type="protein sequence ID" value="ACK98442.1"/>
    <property type="molecule type" value="Genomic_DNA"/>
</dbReference>
<dbReference type="RefSeq" id="WP_001143081.1">
    <property type="nucleotide sequence ID" value="NC_011772.1"/>
</dbReference>
<dbReference type="SMR" id="B7IXJ5"/>
<dbReference type="KEGG" id="bcg:BCG9842_B0920"/>
<dbReference type="HOGENOM" id="CLU_069532_3_0_9"/>
<dbReference type="Proteomes" id="UP000006744">
    <property type="component" value="Chromosome"/>
</dbReference>
<dbReference type="GO" id="GO:0005737">
    <property type="term" value="C:cytoplasm"/>
    <property type="evidence" value="ECO:0007669"/>
    <property type="project" value="UniProtKB-SubCell"/>
</dbReference>
<dbReference type="GO" id="GO:0003677">
    <property type="term" value="F:DNA binding"/>
    <property type="evidence" value="ECO:0007669"/>
    <property type="project" value="UniProtKB-KW"/>
</dbReference>
<dbReference type="GO" id="GO:0003700">
    <property type="term" value="F:DNA-binding transcription factor activity"/>
    <property type="evidence" value="ECO:0007669"/>
    <property type="project" value="UniProtKB-UniRule"/>
</dbReference>
<dbReference type="GO" id="GO:0030145">
    <property type="term" value="F:manganese ion binding"/>
    <property type="evidence" value="ECO:0007669"/>
    <property type="project" value="UniProtKB-UniRule"/>
</dbReference>
<dbReference type="GO" id="GO:0046983">
    <property type="term" value="F:protein dimerization activity"/>
    <property type="evidence" value="ECO:0007669"/>
    <property type="project" value="InterPro"/>
</dbReference>
<dbReference type="GO" id="GO:0030026">
    <property type="term" value="P:intracellular manganese ion homeostasis"/>
    <property type="evidence" value="ECO:0007669"/>
    <property type="project" value="UniProtKB-UniRule"/>
</dbReference>
<dbReference type="FunFam" id="1.10.10.10:FF:000189">
    <property type="entry name" value="HTH-type transcriptional regulator MntR"/>
    <property type="match status" value="1"/>
</dbReference>
<dbReference type="FunFam" id="1.10.60.10:FF:000003">
    <property type="entry name" value="HTH-type transcriptional regulator MntR"/>
    <property type="match status" value="1"/>
</dbReference>
<dbReference type="Gene3D" id="1.10.60.10">
    <property type="entry name" value="Iron dependent repressor, metal binding and dimerisation domain"/>
    <property type="match status" value="1"/>
</dbReference>
<dbReference type="Gene3D" id="1.10.10.10">
    <property type="entry name" value="Winged helix-like DNA-binding domain superfamily/Winged helix DNA-binding domain"/>
    <property type="match status" value="1"/>
</dbReference>
<dbReference type="HAMAP" id="MF_00732">
    <property type="entry name" value="HTH_MntR"/>
    <property type="match status" value="1"/>
</dbReference>
<dbReference type="InterPro" id="IPR050536">
    <property type="entry name" value="DtxR_MntR_Metal-Reg"/>
</dbReference>
<dbReference type="InterPro" id="IPR001367">
    <property type="entry name" value="Fe_dep_repressor"/>
</dbReference>
<dbReference type="InterPro" id="IPR036421">
    <property type="entry name" value="Fe_dep_repressor_sf"/>
</dbReference>
<dbReference type="InterPro" id="IPR022687">
    <property type="entry name" value="HTH_DTXR"/>
</dbReference>
<dbReference type="InterPro" id="IPR022897">
    <property type="entry name" value="HTH_tscrpt_reg_MntR"/>
</dbReference>
<dbReference type="InterPro" id="IPR022689">
    <property type="entry name" value="Iron_dep_repressor"/>
</dbReference>
<dbReference type="InterPro" id="IPR036388">
    <property type="entry name" value="WH-like_DNA-bd_sf"/>
</dbReference>
<dbReference type="InterPro" id="IPR036390">
    <property type="entry name" value="WH_DNA-bd_sf"/>
</dbReference>
<dbReference type="NCBIfam" id="NF003025">
    <property type="entry name" value="PRK03902.1"/>
    <property type="match status" value="1"/>
</dbReference>
<dbReference type="PANTHER" id="PTHR33238">
    <property type="entry name" value="IRON (METAL) DEPENDENT REPRESSOR, DTXR FAMILY"/>
    <property type="match status" value="1"/>
</dbReference>
<dbReference type="PANTHER" id="PTHR33238:SF11">
    <property type="entry name" value="TRANSCRIPTIONAL REGULATOR MNTR"/>
    <property type="match status" value="1"/>
</dbReference>
<dbReference type="Pfam" id="PF02742">
    <property type="entry name" value="Fe_dep_repr_C"/>
    <property type="match status" value="1"/>
</dbReference>
<dbReference type="Pfam" id="PF01325">
    <property type="entry name" value="Fe_dep_repress"/>
    <property type="match status" value="1"/>
</dbReference>
<dbReference type="SMART" id="SM00529">
    <property type="entry name" value="HTH_DTXR"/>
    <property type="match status" value="1"/>
</dbReference>
<dbReference type="SUPFAM" id="SSF47979">
    <property type="entry name" value="Iron-dependent repressor protein, dimerization domain"/>
    <property type="match status" value="1"/>
</dbReference>
<dbReference type="SUPFAM" id="SSF46785">
    <property type="entry name" value="Winged helix' DNA-binding domain"/>
    <property type="match status" value="1"/>
</dbReference>
<dbReference type="PROSITE" id="PS50944">
    <property type="entry name" value="HTH_DTXR"/>
    <property type="match status" value="1"/>
</dbReference>
<feature type="chain" id="PRO_1000132743" description="HTH-type transcriptional regulator MntR">
    <location>
        <begin position="1"/>
        <end position="142"/>
    </location>
</feature>
<feature type="domain" description="HTH dtxR-type" evidence="1">
    <location>
        <begin position="1"/>
        <end position="63"/>
    </location>
</feature>
<feature type="binding site" evidence="1">
    <location>
        <position position="8"/>
    </location>
    <ligand>
        <name>Mn(2+)</name>
        <dbReference type="ChEBI" id="CHEBI:29035"/>
        <label>1</label>
    </ligand>
</feature>
<feature type="binding site" evidence="1">
    <location>
        <position position="11"/>
    </location>
    <ligand>
        <name>Mn(2+)</name>
        <dbReference type="ChEBI" id="CHEBI:29035"/>
        <label>2</label>
    </ligand>
</feature>
<feature type="binding site" evidence="1">
    <location>
        <position position="77"/>
    </location>
    <ligand>
        <name>Mn(2+)</name>
        <dbReference type="ChEBI" id="CHEBI:29035"/>
        <label>2</label>
    </ligand>
</feature>
<feature type="binding site" evidence="1">
    <location>
        <position position="99"/>
    </location>
    <ligand>
        <name>Mn(2+)</name>
        <dbReference type="ChEBI" id="CHEBI:29035"/>
        <label>1</label>
    </ligand>
</feature>
<feature type="binding site" evidence="1">
    <location>
        <position position="99"/>
    </location>
    <ligand>
        <name>Mn(2+)</name>
        <dbReference type="ChEBI" id="CHEBI:29035"/>
        <label>2</label>
    </ligand>
</feature>
<feature type="binding site" evidence="1">
    <location>
        <position position="102"/>
    </location>
    <ligand>
        <name>Mn(2+)</name>
        <dbReference type="ChEBI" id="CHEBI:29035"/>
        <label>1</label>
    </ligand>
</feature>
<feature type="binding site" evidence="1">
    <location>
        <position position="102"/>
    </location>
    <ligand>
        <name>Mn(2+)</name>
        <dbReference type="ChEBI" id="CHEBI:29035"/>
        <label>2</label>
    </ligand>
</feature>
<feature type="binding site" evidence="1">
    <location>
        <position position="103"/>
    </location>
    <ligand>
        <name>Mn(2+)</name>
        <dbReference type="ChEBI" id="CHEBI:29035"/>
        <label>1</label>
    </ligand>
</feature>
<accession>B7IXJ5</accession>
<reference key="1">
    <citation type="submission" date="2008-10" db="EMBL/GenBank/DDBJ databases">
        <title>Genome sequence of Bacillus cereus G9842.</title>
        <authorList>
            <person name="Dodson R.J."/>
            <person name="Durkin A.S."/>
            <person name="Rosovitz M.J."/>
            <person name="Rasko D.A."/>
            <person name="Hoffmaster A."/>
            <person name="Ravel J."/>
            <person name="Sutton G."/>
        </authorList>
    </citation>
    <scope>NUCLEOTIDE SEQUENCE [LARGE SCALE GENOMIC DNA]</scope>
    <source>
        <strain>G9842</strain>
    </source>
</reference>
<protein>
    <recommendedName>
        <fullName evidence="1">HTH-type transcriptional regulator MntR</fullName>
    </recommendedName>
    <alternativeName>
        <fullName evidence="1">Manganese transport regulator</fullName>
    </alternativeName>
</protein>
<keyword id="KW-0010">Activator</keyword>
<keyword id="KW-0963">Cytoplasm</keyword>
<keyword id="KW-0238">DNA-binding</keyword>
<keyword id="KW-0464">Manganese</keyword>
<keyword id="KW-0479">Metal-binding</keyword>
<keyword id="KW-0678">Repressor</keyword>
<keyword id="KW-0804">Transcription</keyword>
<keyword id="KW-0805">Transcription regulation</keyword>
<comment type="function">
    <text evidence="1">Central regulator of manganese homeostasis.</text>
</comment>
<comment type="activity regulation">
    <text evidence="1">DNA binding is strongly activated by Mn(2+).</text>
</comment>
<comment type="subunit">
    <text evidence="1">Homodimer.</text>
</comment>
<comment type="subcellular location">
    <subcellularLocation>
        <location evidence="1">Cytoplasm</location>
    </subcellularLocation>
</comment>
<comment type="similarity">
    <text evidence="1">Belongs to the DtxR/MntR family.</text>
</comment>
<evidence type="ECO:0000255" key="1">
    <source>
        <dbReference type="HAMAP-Rule" id="MF_00732"/>
    </source>
</evidence>